<sequence>MPASKKISDRNHLGQVFDKLLNQIGESEEFELPEWLNKGKPTPYIFIRRNIYLTKKVKRRVEDDGIFCSCSSSSPGSSSTVCGSNCHCGMLFSSCSSSCKCGSECNNKPFQQRHVKKMKLIQTEKCGSGIVAEEEIEAGEFIIEYVGEVIDDKTCEERLWKMKHRGETNFYLCEITRDMVIDATHKGNKSRYINHSCNPNTQMQKWIIDGETRIGIFATRGIKKGEHLTYDYQFVQFGADQDCHCGAVGCRRKLGVKPSKPKIASDEAFNLVAHELAQTLPKVHQNGLVNRHIDAGKSWNNLSQRDTCSRNCIGVVIRLSRPTSDRCFGLVRHFDEYSRKHSVMFEDGVTEFVDMSREDWEIV</sequence>
<comment type="function">
    <text evidence="1">Histone methyltransferase.</text>
</comment>
<comment type="catalytic activity">
    <reaction evidence="5">
        <text>L-lysyl-[histone] + S-adenosyl-L-methionine = N(6)-methyl-L-lysyl-[histone] + S-adenosyl-L-homocysteine + H(+)</text>
        <dbReference type="Rhea" id="RHEA:10024"/>
        <dbReference type="Rhea" id="RHEA-COMP:9845"/>
        <dbReference type="Rhea" id="RHEA-COMP:9846"/>
        <dbReference type="ChEBI" id="CHEBI:15378"/>
        <dbReference type="ChEBI" id="CHEBI:29969"/>
        <dbReference type="ChEBI" id="CHEBI:57856"/>
        <dbReference type="ChEBI" id="CHEBI:59789"/>
        <dbReference type="ChEBI" id="CHEBI:61929"/>
    </reaction>
</comment>
<comment type="subcellular location">
    <subcellularLocation>
        <location evidence="1">Nucleus</location>
    </subcellularLocation>
    <subcellularLocation>
        <location evidence="1">Chromosome</location>
        <location evidence="1">Centromere</location>
    </subcellularLocation>
    <text evidence="1">Associates with centromeric constitutive heterochromatin.</text>
</comment>
<comment type="similarity">
    <text evidence="5">Belongs to the class V-like SAM-binding methyltransferase superfamily. Histone-lysine methyltransferase family. SET2 subfamily.</text>
</comment>
<reference key="1">
    <citation type="journal article" date="1999" name="Nature">
        <title>Sequence and analysis of chromosome 2 of the plant Arabidopsis thaliana.</title>
        <authorList>
            <person name="Lin X."/>
            <person name="Kaul S."/>
            <person name="Rounsley S.D."/>
            <person name="Shea T.P."/>
            <person name="Benito M.-I."/>
            <person name="Town C.D."/>
            <person name="Fujii C.Y."/>
            <person name="Mason T.M."/>
            <person name="Bowman C.L."/>
            <person name="Barnstead M.E."/>
            <person name="Feldblyum T.V."/>
            <person name="Buell C.R."/>
            <person name="Ketchum K.A."/>
            <person name="Lee J.J."/>
            <person name="Ronning C.M."/>
            <person name="Koo H.L."/>
            <person name="Moffat K.S."/>
            <person name="Cronin L.A."/>
            <person name="Shen M."/>
            <person name="Pai G."/>
            <person name="Van Aken S."/>
            <person name="Umayam L."/>
            <person name="Tallon L.J."/>
            <person name="Gill J.E."/>
            <person name="Adams M.D."/>
            <person name="Carrera A.J."/>
            <person name="Creasy T.H."/>
            <person name="Goodman H.M."/>
            <person name="Somerville C.R."/>
            <person name="Copenhaver G.P."/>
            <person name="Preuss D."/>
            <person name="Nierman W.C."/>
            <person name="White O."/>
            <person name="Eisen J.A."/>
            <person name="Salzberg S.L."/>
            <person name="Fraser C.M."/>
            <person name="Venter J.C."/>
        </authorList>
    </citation>
    <scope>NUCLEOTIDE SEQUENCE [LARGE SCALE GENOMIC DNA]</scope>
    <source>
        <strain>cv. Columbia</strain>
    </source>
</reference>
<reference key="2">
    <citation type="journal article" date="2017" name="Plant J.">
        <title>Araport11: a complete reannotation of the Arabidopsis thaliana reference genome.</title>
        <authorList>
            <person name="Cheng C.Y."/>
            <person name="Krishnakumar V."/>
            <person name="Chan A.P."/>
            <person name="Thibaud-Nissen F."/>
            <person name="Schobel S."/>
            <person name="Town C.D."/>
        </authorList>
    </citation>
    <scope>GENOME REANNOTATION</scope>
    <source>
        <strain>cv. Columbia</strain>
    </source>
</reference>
<reference key="3">
    <citation type="journal article" date="2003" name="Science">
        <title>Empirical analysis of transcriptional activity in the Arabidopsis genome.</title>
        <authorList>
            <person name="Yamada K."/>
            <person name="Lim J."/>
            <person name="Dale J.M."/>
            <person name="Chen H."/>
            <person name="Shinn P."/>
            <person name="Palm C.J."/>
            <person name="Southwick A.M."/>
            <person name="Wu H.C."/>
            <person name="Kim C.J."/>
            <person name="Nguyen M."/>
            <person name="Pham P.K."/>
            <person name="Cheuk R.F."/>
            <person name="Karlin-Newmann G."/>
            <person name="Liu S.X."/>
            <person name="Lam B."/>
            <person name="Sakano H."/>
            <person name="Wu T."/>
            <person name="Yu G."/>
            <person name="Miranda M."/>
            <person name="Quach H.L."/>
            <person name="Tripp M."/>
            <person name="Chang C.H."/>
            <person name="Lee J.M."/>
            <person name="Toriumi M.J."/>
            <person name="Chan M.M."/>
            <person name="Tang C.C."/>
            <person name="Onodera C.S."/>
            <person name="Deng J.M."/>
            <person name="Akiyama K."/>
            <person name="Ansari Y."/>
            <person name="Arakawa T."/>
            <person name="Banh J."/>
            <person name="Banno F."/>
            <person name="Bowser L."/>
            <person name="Brooks S.Y."/>
            <person name="Carninci P."/>
            <person name="Chao Q."/>
            <person name="Choy N."/>
            <person name="Enju A."/>
            <person name="Goldsmith A.D."/>
            <person name="Gurjal M."/>
            <person name="Hansen N.F."/>
            <person name="Hayashizaki Y."/>
            <person name="Johnson-Hopson C."/>
            <person name="Hsuan V.W."/>
            <person name="Iida K."/>
            <person name="Karnes M."/>
            <person name="Khan S."/>
            <person name="Koesema E."/>
            <person name="Ishida J."/>
            <person name="Jiang P.X."/>
            <person name="Jones T."/>
            <person name="Kawai J."/>
            <person name="Kamiya A."/>
            <person name="Meyers C."/>
            <person name="Nakajima M."/>
            <person name="Narusaka M."/>
            <person name="Seki M."/>
            <person name="Sakurai T."/>
            <person name="Satou M."/>
            <person name="Tamse R."/>
            <person name="Vaysberg M."/>
            <person name="Wallender E.K."/>
            <person name="Wong C."/>
            <person name="Yamamura Y."/>
            <person name="Yuan S."/>
            <person name="Shinozaki K."/>
            <person name="Davis R.W."/>
            <person name="Theologis A."/>
            <person name="Ecker J.R."/>
        </authorList>
    </citation>
    <scope>NUCLEOTIDE SEQUENCE [LARGE SCALE MRNA]</scope>
    <source>
        <strain>cv. Columbia</strain>
    </source>
</reference>
<reference key="4">
    <citation type="journal article" date="2001" name="Nucleic Acids Res.">
        <title>The Arabidopsis thaliana genome contains at least 29 active genes encoding SET domain proteins that can be assigned to four evolutionarily conserved classes.</title>
        <authorList>
            <person name="Baumbusch L.O."/>
            <person name="Thorstensen T."/>
            <person name="Krauss V."/>
            <person name="Fischer A."/>
            <person name="Naumann K."/>
            <person name="Assalkhou R."/>
            <person name="Schulz I."/>
            <person name="Reuter G."/>
            <person name="Aalen R.B."/>
        </authorList>
    </citation>
    <scope>NUCLEOTIDE SEQUENCE [MRNA] OF 11-135</scope>
    <scope>NOMENCLATURE</scope>
</reference>
<gene>
    <name type="primary">ASHH3</name>
    <name type="synonym">SDG7</name>
    <name type="synonym">SET7</name>
    <name type="ordered locus">At2g44150</name>
    <name type="ORF">F6E13.28</name>
</gene>
<organism>
    <name type="scientific">Arabidopsis thaliana</name>
    <name type="common">Mouse-ear cress</name>
    <dbReference type="NCBI Taxonomy" id="3702"/>
    <lineage>
        <taxon>Eukaryota</taxon>
        <taxon>Viridiplantae</taxon>
        <taxon>Streptophyta</taxon>
        <taxon>Embryophyta</taxon>
        <taxon>Tracheophyta</taxon>
        <taxon>Spermatophyta</taxon>
        <taxon>Magnoliopsida</taxon>
        <taxon>eudicotyledons</taxon>
        <taxon>Gunneridae</taxon>
        <taxon>Pentapetalae</taxon>
        <taxon>rosids</taxon>
        <taxon>malvids</taxon>
        <taxon>Brassicales</taxon>
        <taxon>Brassicaceae</taxon>
        <taxon>Camelineae</taxon>
        <taxon>Arabidopsis</taxon>
    </lineage>
</organism>
<keyword id="KW-0137">Centromere</keyword>
<keyword id="KW-0156">Chromatin regulator</keyword>
<keyword id="KW-0158">Chromosome</keyword>
<keyword id="KW-0489">Methyltransferase</keyword>
<keyword id="KW-0539">Nucleus</keyword>
<keyword id="KW-1185">Reference proteome</keyword>
<keyword id="KW-0949">S-adenosyl-L-methionine</keyword>
<keyword id="KW-0808">Transferase</keyword>
<accession>Q945S8</accession>
<accession>O80584</accession>
<accession>Q94AQ1</accession>
<proteinExistence type="evidence at transcript level"/>
<feature type="chain" id="PRO_0000233372" description="Histone-lysine N-methyltransferase ASHH3">
    <location>
        <begin position="1"/>
        <end position="363"/>
    </location>
</feature>
<feature type="domain" description="AWS" evidence="4">
    <location>
        <begin position="63"/>
        <end position="114"/>
    </location>
</feature>
<feature type="domain" description="SET" evidence="3">
    <location>
        <begin position="116"/>
        <end position="233"/>
    </location>
</feature>
<feature type="domain" description="Post-SET" evidence="2">
    <location>
        <begin position="239"/>
        <end position="255"/>
    </location>
</feature>
<feature type="sequence conflict" description="In Ref. 4; AAL01111." evidence="6" ref="4">
    <original>K</original>
    <variation>E</variation>
    <location>
        <position position="55"/>
    </location>
</feature>
<protein>
    <recommendedName>
        <fullName>Histone-lysine N-methyltransferase ASHH3</fullName>
        <ecNumber>2.1.1.-</ecNumber>
    </recommendedName>
    <alternativeName>
        <fullName>ASH1 homolog 3</fullName>
    </alternativeName>
    <alternativeName>
        <fullName>Protein SET DOMAIN GROUP 7</fullName>
    </alternativeName>
</protein>
<name>ASHH3_ARATH</name>
<dbReference type="EC" id="2.1.1.-"/>
<dbReference type="EMBL" id="AC004005">
    <property type="protein sequence ID" value="AAC23419.2"/>
    <property type="molecule type" value="Genomic_DNA"/>
</dbReference>
<dbReference type="EMBL" id="CP002685">
    <property type="protein sequence ID" value="AEC10383.1"/>
    <property type="molecule type" value="Genomic_DNA"/>
</dbReference>
<dbReference type="EMBL" id="AY045886">
    <property type="protein sequence ID" value="AAK76560.1"/>
    <property type="molecule type" value="mRNA"/>
</dbReference>
<dbReference type="EMBL" id="AY091447">
    <property type="protein sequence ID" value="AAM14386.1"/>
    <property type="molecule type" value="mRNA"/>
</dbReference>
<dbReference type="EMBL" id="AF408060">
    <property type="protein sequence ID" value="AAL01111.1"/>
    <property type="molecule type" value="mRNA"/>
</dbReference>
<dbReference type="PIR" id="T00695">
    <property type="entry name" value="T00695"/>
</dbReference>
<dbReference type="RefSeq" id="NP_566010.1">
    <property type="nucleotide sequence ID" value="NM_129978.4"/>
</dbReference>
<dbReference type="SMR" id="Q945S8"/>
<dbReference type="BioGRID" id="4357">
    <property type="interactions" value="10"/>
</dbReference>
<dbReference type="FunCoup" id="Q945S8">
    <property type="interactions" value="378"/>
</dbReference>
<dbReference type="IntAct" id="Q945S8">
    <property type="interactions" value="10"/>
</dbReference>
<dbReference type="STRING" id="3702.Q945S8"/>
<dbReference type="PaxDb" id="3702-AT2G44150.1"/>
<dbReference type="ProteomicsDB" id="246851"/>
<dbReference type="EnsemblPlants" id="AT2G44150.1">
    <property type="protein sequence ID" value="AT2G44150.1"/>
    <property type="gene ID" value="AT2G44150"/>
</dbReference>
<dbReference type="GeneID" id="819021"/>
<dbReference type="Gramene" id="AT2G44150.1">
    <property type="protein sequence ID" value="AT2G44150.1"/>
    <property type="gene ID" value="AT2G44150"/>
</dbReference>
<dbReference type="KEGG" id="ath:AT2G44150"/>
<dbReference type="Araport" id="AT2G44150"/>
<dbReference type="TAIR" id="AT2G44150">
    <property type="gene designation" value="ASHH3"/>
</dbReference>
<dbReference type="eggNOG" id="KOG1081">
    <property type="taxonomic scope" value="Eukaryota"/>
</dbReference>
<dbReference type="HOGENOM" id="CLU_020840_1_0_1"/>
<dbReference type="InParanoid" id="Q945S8"/>
<dbReference type="OMA" id="WLNKGKP"/>
<dbReference type="PhylomeDB" id="Q945S8"/>
<dbReference type="PRO" id="PR:Q945S8"/>
<dbReference type="Proteomes" id="UP000006548">
    <property type="component" value="Chromosome 2"/>
</dbReference>
<dbReference type="ExpressionAtlas" id="Q945S8">
    <property type="expression patterns" value="baseline and differential"/>
</dbReference>
<dbReference type="GO" id="GO:0000775">
    <property type="term" value="C:chromosome, centromeric region"/>
    <property type="evidence" value="ECO:0007669"/>
    <property type="project" value="UniProtKB-SubCell"/>
</dbReference>
<dbReference type="GO" id="GO:0005783">
    <property type="term" value="C:endoplasmic reticulum"/>
    <property type="evidence" value="ECO:0000314"/>
    <property type="project" value="TAIR"/>
</dbReference>
<dbReference type="GO" id="GO:0005634">
    <property type="term" value="C:nucleus"/>
    <property type="evidence" value="ECO:0007669"/>
    <property type="project" value="UniProtKB-SubCell"/>
</dbReference>
<dbReference type="GO" id="GO:0009506">
    <property type="term" value="C:plasmodesma"/>
    <property type="evidence" value="ECO:0007005"/>
    <property type="project" value="TAIR"/>
</dbReference>
<dbReference type="GO" id="GO:0042054">
    <property type="term" value="F:histone methyltransferase activity"/>
    <property type="evidence" value="ECO:0007669"/>
    <property type="project" value="InterPro"/>
</dbReference>
<dbReference type="GO" id="GO:0016279">
    <property type="term" value="F:protein-lysine N-methyltransferase activity"/>
    <property type="evidence" value="ECO:0000314"/>
    <property type="project" value="TAIR"/>
</dbReference>
<dbReference type="GO" id="GO:0032259">
    <property type="term" value="P:methylation"/>
    <property type="evidence" value="ECO:0007669"/>
    <property type="project" value="UniProtKB-KW"/>
</dbReference>
<dbReference type="CDD" id="cd19175">
    <property type="entry name" value="SET_ASHR3-like"/>
    <property type="match status" value="1"/>
</dbReference>
<dbReference type="CDD" id="cd20404">
    <property type="entry name" value="Tudor_Agenet_AtEML-like"/>
    <property type="match status" value="1"/>
</dbReference>
<dbReference type="FunFam" id="2.170.270.10:FF:000034">
    <property type="entry name" value="Histone-lysine N-methyltransferase"/>
    <property type="match status" value="1"/>
</dbReference>
<dbReference type="Gene3D" id="2.170.270.10">
    <property type="entry name" value="SET domain"/>
    <property type="match status" value="1"/>
</dbReference>
<dbReference type="InterPro" id="IPR047893">
    <property type="entry name" value="ASHR3-like_SET"/>
</dbReference>
<dbReference type="InterPro" id="IPR006560">
    <property type="entry name" value="AWS_dom"/>
</dbReference>
<dbReference type="InterPro" id="IPR025787">
    <property type="entry name" value="Hist-Lys_N-MeTrfase_SET2_plant"/>
</dbReference>
<dbReference type="InterPro" id="IPR003616">
    <property type="entry name" value="Post-SET_dom"/>
</dbReference>
<dbReference type="InterPro" id="IPR050777">
    <property type="entry name" value="SET2_Histone-Lys_MeTrsfase"/>
</dbReference>
<dbReference type="InterPro" id="IPR001214">
    <property type="entry name" value="SET_dom"/>
</dbReference>
<dbReference type="InterPro" id="IPR046341">
    <property type="entry name" value="SET_dom_sf"/>
</dbReference>
<dbReference type="PANTHER" id="PTHR22884">
    <property type="entry name" value="SET DOMAIN PROTEINS"/>
    <property type="match status" value="1"/>
</dbReference>
<dbReference type="Pfam" id="PF00856">
    <property type="entry name" value="SET"/>
    <property type="match status" value="1"/>
</dbReference>
<dbReference type="SMART" id="SM00570">
    <property type="entry name" value="AWS"/>
    <property type="match status" value="1"/>
</dbReference>
<dbReference type="SMART" id="SM00508">
    <property type="entry name" value="PostSET"/>
    <property type="match status" value="1"/>
</dbReference>
<dbReference type="SMART" id="SM00317">
    <property type="entry name" value="SET"/>
    <property type="match status" value="1"/>
</dbReference>
<dbReference type="SUPFAM" id="SSF82199">
    <property type="entry name" value="SET domain"/>
    <property type="match status" value="1"/>
</dbReference>
<dbReference type="PROSITE" id="PS51215">
    <property type="entry name" value="AWS"/>
    <property type="match status" value="1"/>
</dbReference>
<dbReference type="PROSITE" id="PS50868">
    <property type="entry name" value="POST_SET"/>
    <property type="match status" value="1"/>
</dbReference>
<dbReference type="PROSITE" id="PS51578">
    <property type="entry name" value="SAM_MT43_SET2_2"/>
    <property type="match status" value="1"/>
</dbReference>
<dbReference type="PROSITE" id="PS50280">
    <property type="entry name" value="SET"/>
    <property type="match status" value="1"/>
</dbReference>
<evidence type="ECO:0000250" key="1"/>
<evidence type="ECO:0000255" key="2">
    <source>
        <dbReference type="PROSITE-ProRule" id="PRU00155"/>
    </source>
</evidence>
<evidence type="ECO:0000255" key="3">
    <source>
        <dbReference type="PROSITE-ProRule" id="PRU00190"/>
    </source>
</evidence>
<evidence type="ECO:0000255" key="4">
    <source>
        <dbReference type="PROSITE-ProRule" id="PRU00562"/>
    </source>
</evidence>
<evidence type="ECO:0000255" key="5">
    <source>
        <dbReference type="PROSITE-ProRule" id="PRU00911"/>
    </source>
</evidence>
<evidence type="ECO:0000305" key="6"/>